<keyword id="KW-0030">Aminoacyl-tRNA synthetase</keyword>
<keyword id="KW-0067">ATP-binding</keyword>
<keyword id="KW-0963">Cytoplasm</keyword>
<keyword id="KW-0436">Ligase</keyword>
<keyword id="KW-0547">Nucleotide-binding</keyword>
<keyword id="KW-0648">Protein biosynthesis</keyword>
<keyword id="KW-1185">Reference proteome</keyword>
<protein>
    <recommendedName>
        <fullName evidence="1">Arginine--tRNA ligase</fullName>
        <ecNumber evidence="1">6.1.1.19</ecNumber>
    </recommendedName>
    <alternativeName>
        <fullName evidence="1">Arginyl-tRNA synthetase</fullName>
        <shortName evidence="1">ArgRS</shortName>
    </alternativeName>
</protein>
<proteinExistence type="inferred from homology"/>
<sequence>MNIIDQVKQTLVEEIAASINKAGLADEIPDIKIEVPKDTKNGDYATNIAMVLTKIAKRNPREIAQAIVDNLDTEKAHVKQIDIAGPGFINFYLDNQYLTAIIPEAIEKGDQFGHVNESKGQNVLLEYVSANPTGDLHIGHARNAAVGDALANILTAAGYNVTREYYINDAGNQITNLARSIETRFFEALGDNSYSMPEDGYNGKDIIEIGKDLAEKHPEIKDYSEEARLKEFRKLGVEYEMAKLKNDLAEFNTHFDNWFSETSLYEKGEILEVLAKMKELGYTYEADGATWLRTTDFKDDKDRVLIKNDGTYTYFLPDIAYHFDKVKRGNDILIDLFGADHHGYINRLKASLETFGVDSNRLEIQIMQMVRLMENGKEVKMSKRTGNAITLREIMDEVGVDAARYFLTMRSPDSHFDFDMELAKEQSQDNPVYYAQYAHARICSILKQAKEQGIEVTAANDFTTITNEKAIELLKKVADFEPTIESAAEHRSAHRITNYIQDLASHFHKFYNAEKVLTDDIEKTKAHVAMIEAVRITLKNALAMVGVSAPESM</sequence>
<evidence type="ECO:0000255" key="1">
    <source>
        <dbReference type="HAMAP-Rule" id="MF_00123"/>
    </source>
</evidence>
<accession>Q2G0F8</accession>
<reference key="1">
    <citation type="book" date="2006" name="Gram positive pathogens, 2nd edition">
        <title>The Staphylococcus aureus NCTC 8325 genome.</title>
        <editorList>
            <person name="Fischetti V."/>
            <person name="Novick R."/>
            <person name="Ferretti J."/>
            <person name="Portnoy D."/>
            <person name="Rood J."/>
        </editorList>
        <authorList>
            <person name="Gillaspy A.F."/>
            <person name="Worrell V."/>
            <person name="Orvis J."/>
            <person name="Roe B.A."/>
            <person name="Dyer D.W."/>
            <person name="Iandolo J.J."/>
        </authorList>
    </citation>
    <scope>NUCLEOTIDE SEQUENCE [LARGE SCALE GENOMIC DNA]</scope>
    <source>
        <strain>NCTC 8325 / PS 47</strain>
    </source>
</reference>
<comment type="catalytic activity">
    <reaction evidence="1">
        <text>tRNA(Arg) + L-arginine + ATP = L-arginyl-tRNA(Arg) + AMP + diphosphate</text>
        <dbReference type="Rhea" id="RHEA:20301"/>
        <dbReference type="Rhea" id="RHEA-COMP:9658"/>
        <dbReference type="Rhea" id="RHEA-COMP:9673"/>
        <dbReference type="ChEBI" id="CHEBI:30616"/>
        <dbReference type="ChEBI" id="CHEBI:32682"/>
        <dbReference type="ChEBI" id="CHEBI:33019"/>
        <dbReference type="ChEBI" id="CHEBI:78442"/>
        <dbReference type="ChEBI" id="CHEBI:78513"/>
        <dbReference type="ChEBI" id="CHEBI:456215"/>
        <dbReference type="EC" id="6.1.1.19"/>
    </reaction>
</comment>
<comment type="subunit">
    <text evidence="1">Monomer.</text>
</comment>
<comment type="subcellular location">
    <subcellularLocation>
        <location evidence="1">Cytoplasm</location>
    </subcellularLocation>
</comment>
<comment type="similarity">
    <text evidence="1">Belongs to the class-I aminoacyl-tRNA synthetase family.</text>
</comment>
<organism>
    <name type="scientific">Staphylococcus aureus (strain NCTC 8325 / PS 47)</name>
    <dbReference type="NCBI Taxonomy" id="93061"/>
    <lineage>
        <taxon>Bacteria</taxon>
        <taxon>Bacillati</taxon>
        <taxon>Bacillota</taxon>
        <taxon>Bacilli</taxon>
        <taxon>Bacillales</taxon>
        <taxon>Staphylococcaceae</taxon>
        <taxon>Staphylococcus</taxon>
    </lineage>
</organism>
<feature type="chain" id="PRO_1000018126" description="Arginine--tRNA ligase">
    <location>
        <begin position="1"/>
        <end position="553"/>
    </location>
</feature>
<feature type="short sequence motif" description="'HIGH' region">
    <location>
        <begin position="130"/>
        <end position="140"/>
    </location>
</feature>
<name>SYR_STAA8</name>
<dbReference type="EC" id="6.1.1.19" evidence="1"/>
<dbReference type="EMBL" id="CP000253">
    <property type="protein sequence ID" value="ABD29749.1"/>
    <property type="molecule type" value="Genomic_DNA"/>
</dbReference>
<dbReference type="RefSeq" id="WP_001021145.1">
    <property type="nucleotide sequence ID" value="NZ_LS483365.1"/>
</dbReference>
<dbReference type="RefSeq" id="YP_499174.1">
    <property type="nucleotide sequence ID" value="NC_007795.1"/>
</dbReference>
<dbReference type="SMR" id="Q2G0F8"/>
<dbReference type="STRING" id="93061.SAOUHSC_00611"/>
<dbReference type="PaxDb" id="1280-SAXN108_0673"/>
<dbReference type="GeneID" id="3918930"/>
<dbReference type="KEGG" id="sao:SAOUHSC_00611"/>
<dbReference type="PATRIC" id="fig|93061.5.peg.547"/>
<dbReference type="eggNOG" id="COG0018">
    <property type="taxonomic scope" value="Bacteria"/>
</dbReference>
<dbReference type="HOGENOM" id="CLU_006406_0_1_9"/>
<dbReference type="OrthoDB" id="9805987at2"/>
<dbReference type="PRO" id="PR:Q2G0F8"/>
<dbReference type="Proteomes" id="UP000008816">
    <property type="component" value="Chromosome"/>
</dbReference>
<dbReference type="GO" id="GO:0005737">
    <property type="term" value="C:cytoplasm"/>
    <property type="evidence" value="ECO:0007669"/>
    <property type="project" value="UniProtKB-SubCell"/>
</dbReference>
<dbReference type="GO" id="GO:0004814">
    <property type="term" value="F:arginine-tRNA ligase activity"/>
    <property type="evidence" value="ECO:0000318"/>
    <property type="project" value="GO_Central"/>
</dbReference>
<dbReference type="GO" id="GO:0005524">
    <property type="term" value="F:ATP binding"/>
    <property type="evidence" value="ECO:0007669"/>
    <property type="project" value="UniProtKB-UniRule"/>
</dbReference>
<dbReference type="GO" id="GO:0006420">
    <property type="term" value="P:arginyl-tRNA aminoacylation"/>
    <property type="evidence" value="ECO:0000318"/>
    <property type="project" value="GO_Central"/>
</dbReference>
<dbReference type="CDD" id="cd00671">
    <property type="entry name" value="ArgRS_core"/>
    <property type="match status" value="1"/>
</dbReference>
<dbReference type="FunFam" id="1.10.730.10:FF:000008">
    <property type="entry name" value="Arginine--tRNA ligase"/>
    <property type="match status" value="1"/>
</dbReference>
<dbReference type="FunFam" id="3.30.1360.70:FF:000003">
    <property type="entry name" value="Arginine--tRNA ligase"/>
    <property type="match status" value="1"/>
</dbReference>
<dbReference type="FunFam" id="3.40.50.620:FF:000062">
    <property type="entry name" value="Arginine--tRNA ligase"/>
    <property type="match status" value="1"/>
</dbReference>
<dbReference type="Gene3D" id="3.30.1360.70">
    <property type="entry name" value="Arginyl tRNA synthetase N-terminal domain"/>
    <property type="match status" value="1"/>
</dbReference>
<dbReference type="Gene3D" id="3.40.50.620">
    <property type="entry name" value="HUPs"/>
    <property type="match status" value="1"/>
</dbReference>
<dbReference type="Gene3D" id="1.10.730.10">
    <property type="entry name" value="Isoleucyl-tRNA Synthetase, Domain 1"/>
    <property type="match status" value="1"/>
</dbReference>
<dbReference type="HAMAP" id="MF_00123">
    <property type="entry name" value="Arg_tRNA_synth"/>
    <property type="match status" value="1"/>
</dbReference>
<dbReference type="InterPro" id="IPR001412">
    <property type="entry name" value="aa-tRNA-synth_I_CS"/>
</dbReference>
<dbReference type="InterPro" id="IPR001278">
    <property type="entry name" value="Arg-tRNA-ligase"/>
</dbReference>
<dbReference type="InterPro" id="IPR005148">
    <property type="entry name" value="Arg-tRNA-synth_N"/>
</dbReference>
<dbReference type="InterPro" id="IPR036695">
    <property type="entry name" value="Arg-tRNA-synth_N_sf"/>
</dbReference>
<dbReference type="InterPro" id="IPR035684">
    <property type="entry name" value="ArgRS_core"/>
</dbReference>
<dbReference type="InterPro" id="IPR008909">
    <property type="entry name" value="DALR_anticod-bd"/>
</dbReference>
<dbReference type="InterPro" id="IPR014729">
    <property type="entry name" value="Rossmann-like_a/b/a_fold"/>
</dbReference>
<dbReference type="InterPro" id="IPR009080">
    <property type="entry name" value="tRNAsynth_Ia_anticodon-bd"/>
</dbReference>
<dbReference type="NCBIfam" id="TIGR00456">
    <property type="entry name" value="argS"/>
    <property type="match status" value="1"/>
</dbReference>
<dbReference type="PANTHER" id="PTHR11956:SF5">
    <property type="entry name" value="ARGININE--TRNA LIGASE, CYTOPLASMIC"/>
    <property type="match status" value="1"/>
</dbReference>
<dbReference type="PANTHER" id="PTHR11956">
    <property type="entry name" value="ARGINYL-TRNA SYNTHETASE"/>
    <property type="match status" value="1"/>
</dbReference>
<dbReference type="Pfam" id="PF03485">
    <property type="entry name" value="Arg_tRNA_synt_N"/>
    <property type="match status" value="1"/>
</dbReference>
<dbReference type="Pfam" id="PF05746">
    <property type="entry name" value="DALR_1"/>
    <property type="match status" value="1"/>
</dbReference>
<dbReference type="Pfam" id="PF00750">
    <property type="entry name" value="tRNA-synt_1d"/>
    <property type="match status" value="1"/>
</dbReference>
<dbReference type="PRINTS" id="PR01038">
    <property type="entry name" value="TRNASYNTHARG"/>
</dbReference>
<dbReference type="SMART" id="SM01016">
    <property type="entry name" value="Arg_tRNA_synt_N"/>
    <property type="match status" value="1"/>
</dbReference>
<dbReference type="SMART" id="SM00836">
    <property type="entry name" value="DALR_1"/>
    <property type="match status" value="1"/>
</dbReference>
<dbReference type="SUPFAM" id="SSF47323">
    <property type="entry name" value="Anticodon-binding domain of a subclass of class I aminoacyl-tRNA synthetases"/>
    <property type="match status" value="1"/>
</dbReference>
<dbReference type="SUPFAM" id="SSF55190">
    <property type="entry name" value="Arginyl-tRNA synthetase (ArgRS), N-terminal 'additional' domain"/>
    <property type="match status" value="1"/>
</dbReference>
<dbReference type="SUPFAM" id="SSF52374">
    <property type="entry name" value="Nucleotidylyl transferase"/>
    <property type="match status" value="1"/>
</dbReference>
<dbReference type="PROSITE" id="PS00178">
    <property type="entry name" value="AA_TRNA_LIGASE_I"/>
    <property type="match status" value="1"/>
</dbReference>
<gene>
    <name evidence="1" type="primary">argS</name>
    <name type="ordered locus">SAOUHSC_00611</name>
</gene>